<comment type="function">
    <text evidence="1 2 3">DNA-dependent RNA polymerase catalyzes the transcription of DNA into RNA using the four ribonucleoside triphosphates as substrates. Common component of RNA polymerases I, II and III which synthesize ribosomal RNA precursors, mRNA precursors and many functional non-coding RNAs, and small RNAs, such as 5S rRNA and tRNAs, respectively. Pol II is the central component of the basal RNA polymerase II transcription machinery. Pols are composed of mobile elements that move relative to each other. In Pol II, POLR2E/RPABC1 is part of the lower jaw surrounding the central large cleft and thought to grab the incoming DNA template. Seems to be the major component in this process (By similarity).</text>
</comment>
<comment type="subunit">
    <text evidence="2">Component of the RNA polymerase I (Pol I), RNA polymerase II (Pol II) and RNA polymerase III (Pol III) complexes consisting of at least 13, 12 and 17 subunits, respectively (By similarity). Pol I complex consists of a ten-subunit catalytic core composed of POLR1A/RPA1, POLR1B/RPA2, POLR1C/RPAC1, POLR1D/RPAC2, POLR1H/RPA12, POLR2E/RPABC1, POLR2F/RPABC2, POLR2H/RPABC3, POLR2K/RPABC4 and POLR2L/RPABC5; a mobile stalk subunit POLR1F/RPA43 protruding from the core and additional subunits homologous to general transcription factors POLR1E/RPA49 and POLR1G/RPA34. Part of Pol I pre-initiation complex (PIC), in which Pol I core assembles with RRN3 and promoter-bound UTBF and SL1/TIF-IB complex (By similarity). Pol II complex contains a ten-subunit catalytic core composed of POLR2A/RPB1, POLR2B/RPB2, POLR2C/RPB3, POLR2I/RPB9, POLR2J/RPB11, POLR2E/RPABC1, POLR2F/RPABC2, POLR2H/RPABC3, POLR2K/RPABC4 and POLR2L/RPABC5 and a mobile stalk composed of two subunits POLR2D/RPB4 and POLR2G/RPB7. Part of Pol II(G) complex, in which Pol II core associates with an additional subunit POLR2M; unlike conventional Pol II, Pol II(G) functions as a transcriptional repressor. Part of TBP-based Pol II pre-initiation complex (PIC), in which Pol II core assembles with general transcription factors and other specific initiation factors including GTF2E1, GTF2E2, GTF2F1, GTF2F2, TCEA1, ERCC2, ERCC3, GTF2H2, GTF2H3, GTF2H4, GTF2H5, GTF2A1, GTF2A2, GTF2B and TBP; this large multi-subunit PIC complex mediates DNA unwinding and targets Pol II core to the transcription start site where the first phosphodiester bond forms. In Pol II complex, this subunit is present in 2-fold molar excess over the other subunits. Pol III complex consists of a ten-subunit catalytic core composed of POLR3A/RPC1, POLR3B/RPC2, POLR1C/RPAC1, POLR1D/RPAC2, POLR3K/RPC10, POLR2E/RPABC1, POLR2F/RPABC2, POLR2H/RPABC3, POLR2K/RPABC4 and POLR2L/RPABC5; a mobile stalk composed of two subunits POLR3H/RPC8 and CRCP/RPC9, protruding from the core and functioning primarily in transcription initiation; and additional subunits homologous to general transcription factors of the RNA polymerase II machinery, POLR3C/RPC3-POLR3F/RPC6-POLR3G/RPC7 heterotrimer required for transcription initiation and POLR3D/RPC4-POLR3E/RPC5 heterodimer involved in both transcription initiation and termination. Component of the PAQosome complex which is responsible for the biogenesis of several protein complexes and which consists of R2TP complex members RUVBL1, RUVBL2, RPAP3 and PIH1D1, URI complex members PFDN2, PFDN6, PDRG1, UXT and URI1 as well as ASDURF, POLR2E and DNAAF10/WDR92. Interacts with URI1.</text>
</comment>
<comment type="subcellular location">
    <subcellularLocation>
        <location evidence="2">Nucleus</location>
    </subcellularLocation>
    <subcellularLocation>
        <location evidence="2">Nucleus</location>
        <location evidence="2">Nucleolus</location>
    </subcellularLocation>
</comment>
<comment type="similarity">
    <text evidence="4">Belongs to the archaeal Rpo5/eukaryotic RPB5 RNA polymerase subunit family.</text>
</comment>
<gene>
    <name evidence="5" type="primary">Polr2e</name>
</gene>
<reference key="1">
    <citation type="journal article" date="2004" name="Genome Res.">
        <title>The status, quality, and expansion of the NIH full-length cDNA project: the Mammalian Gene Collection (MGC).</title>
        <authorList>
            <consortium name="The MGC Project Team"/>
        </authorList>
    </citation>
    <scope>NUCLEOTIDE SEQUENCE [LARGE SCALE MRNA]</scope>
    <source>
        <strain>FVB/N</strain>
        <tissue>Mammary tumor</tissue>
    </source>
</reference>
<reference key="2">
    <citation type="journal article" date="2010" name="Cell">
        <title>A tissue-specific atlas of mouse protein phosphorylation and expression.</title>
        <authorList>
            <person name="Huttlin E.L."/>
            <person name="Jedrychowski M.P."/>
            <person name="Elias J.E."/>
            <person name="Goswami T."/>
            <person name="Rad R."/>
            <person name="Beausoleil S.A."/>
            <person name="Villen J."/>
            <person name="Haas W."/>
            <person name="Sowa M.E."/>
            <person name="Gygi S.P."/>
        </authorList>
    </citation>
    <scope>IDENTIFICATION BY MASS SPECTROMETRY [LARGE SCALE ANALYSIS]</scope>
    <source>
        <tissue>Kidney</tissue>
        <tissue>Lung</tissue>
        <tissue>Spleen</tissue>
        <tissue>Testis</tissue>
    </source>
</reference>
<sequence length="210" mass="24570">MDDEEETYRLWKIRKTIMQLCHDRGYLVTQDELDQTLEEFKAQFGDKPSEGRPRRTDLTVLVAHNDDPTDQMFVFFPEEPKVGIKTIKVYCQRMQEENITRALIVVQQGMTPSAKQSLVDMAPKYVLEQFLQQELLINITEHELVPEHVVMTKEEVTELLARYKLRESQLPRIQAGDPVARYFGIKRGQVVKIIRPSETAGRYITYRLVQ</sequence>
<name>RPAB1_MOUSE</name>
<protein>
    <recommendedName>
        <fullName>DNA-directed RNA polymerases I, II, and III subunit RPABC1</fullName>
        <shortName>RNA polymerases I, II, and III subunit ABC1</shortName>
    </recommendedName>
    <alternativeName>
        <fullName>DNA-directed RNA polymerase II subunit E</fullName>
    </alternativeName>
    <alternativeName>
        <fullName>RPB5 homolog</fullName>
    </alternativeName>
</protein>
<dbReference type="EMBL" id="BC045521">
    <property type="protein sequence ID" value="AAH45521.1"/>
    <property type="molecule type" value="mRNA"/>
</dbReference>
<dbReference type="CCDS" id="CCDS35972.1"/>
<dbReference type="RefSeq" id="NP_079830.2">
    <property type="nucleotide sequence ID" value="NM_025554.2"/>
</dbReference>
<dbReference type="SMR" id="Q80UW8"/>
<dbReference type="BioGRID" id="211461">
    <property type="interactions" value="32"/>
</dbReference>
<dbReference type="FunCoup" id="Q80UW8">
    <property type="interactions" value="3169"/>
</dbReference>
<dbReference type="IntAct" id="Q80UW8">
    <property type="interactions" value="6"/>
</dbReference>
<dbReference type="MINT" id="Q80UW8"/>
<dbReference type="STRING" id="10090.ENSMUSP00000004786"/>
<dbReference type="GlyGen" id="Q80UW8">
    <property type="glycosylation" value="1 site, 1 N-linked glycan (1 site)"/>
</dbReference>
<dbReference type="iPTMnet" id="Q80UW8"/>
<dbReference type="PhosphoSitePlus" id="Q80UW8"/>
<dbReference type="PaxDb" id="10090-ENSMUSP00000004786"/>
<dbReference type="ProteomicsDB" id="300469"/>
<dbReference type="Pumba" id="Q80UW8"/>
<dbReference type="Antibodypedia" id="22550">
    <property type="antibodies" value="316 antibodies from 29 providers"/>
</dbReference>
<dbReference type="DNASU" id="66420"/>
<dbReference type="Ensembl" id="ENSMUST00000004786.10">
    <property type="protein sequence ID" value="ENSMUSP00000004786.10"/>
    <property type="gene ID" value="ENSMUSG00000004667.19"/>
</dbReference>
<dbReference type="GeneID" id="66420"/>
<dbReference type="KEGG" id="mmu:66420"/>
<dbReference type="UCSC" id="uc007gbi.1">
    <property type="organism name" value="mouse"/>
</dbReference>
<dbReference type="AGR" id="MGI:1913670"/>
<dbReference type="CTD" id="5434"/>
<dbReference type="MGI" id="MGI:1913670">
    <property type="gene designation" value="Polr2e"/>
</dbReference>
<dbReference type="VEuPathDB" id="HostDB:ENSMUSG00000004667"/>
<dbReference type="eggNOG" id="KOG3218">
    <property type="taxonomic scope" value="Eukaryota"/>
</dbReference>
<dbReference type="GeneTree" id="ENSGT00390000013841"/>
<dbReference type="HOGENOM" id="CLU_058320_0_1_1"/>
<dbReference type="InParanoid" id="Q80UW8"/>
<dbReference type="OMA" id="VRDRGYF"/>
<dbReference type="OrthoDB" id="248779at2759"/>
<dbReference type="PhylomeDB" id="Q80UW8"/>
<dbReference type="TreeFam" id="TF103040"/>
<dbReference type="Reactome" id="R-MMU-112382">
    <property type="pathway name" value="Formation of RNA Pol II elongation complex"/>
</dbReference>
<dbReference type="Reactome" id="R-MMU-113418">
    <property type="pathway name" value="Formation of the Early Elongation Complex"/>
</dbReference>
<dbReference type="Reactome" id="R-MMU-5250924">
    <property type="pathway name" value="B-WICH complex positively regulates rRNA expression"/>
</dbReference>
<dbReference type="Reactome" id="R-MMU-674695">
    <property type="pathway name" value="RNA Polymerase II Pre-transcription Events"/>
</dbReference>
<dbReference type="Reactome" id="R-MMU-6781823">
    <property type="pathway name" value="Formation of TC-NER Pre-Incision Complex"/>
</dbReference>
<dbReference type="Reactome" id="R-MMU-6782135">
    <property type="pathway name" value="Dual incision in TC-NER"/>
</dbReference>
<dbReference type="Reactome" id="R-MMU-6782210">
    <property type="pathway name" value="Gap-filling DNA repair synthesis and ligation in TC-NER"/>
</dbReference>
<dbReference type="Reactome" id="R-MMU-6796648">
    <property type="pathway name" value="TP53 Regulates Transcription of DNA Repair Genes"/>
</dbReference>
<dbReference type="Reactome" id="R-MMU-6803529">
    <property type="pathway name" value="FGFR2 alternative splicing"/>
</dbReference>
<dbReference type="Reactome" id="R-MMU-6807505">
    <property type="pathway name" value="RNA polymerase II transcribes snRNA genes"/>
</dbReference>
<dbReference type="Reactome" id="R-MMU-72086">
    <property type="pathway name" value="mRNA Capping"/>
</dbReference>
<dbReference type="Reactome" id="R-MMU-72163">
    <property type="pathway name" value="mRNA Splicing - Major Pathway"/>
</dbReference>
<dbReference type="Reactome" id="R-MMU-72165">
    <property type="pathway name" value="mRNA Splicing - Minor Pathway"/>
</dbReference>
<dbReference type="Reactome" id="R-MMU-72203">
    <property type="pathway name" value="Processing of Capped Intron-Containing Pre-mRNA"/>
</dbReference>
<dbReference type="Reactome" id="R-MMU-73762">
    <property type="pathway name" value="RNA Polymerase I Transcription Initiation"/>
</dbReference>
<dbReference type="Reactome" id="R-MMU-73772">
    <property type="pathway name" value="RNA Polymerase I Promoter Escape"/>
</dbReference>
<dbReference type="Reactome" id="R-MMU-73776">
    <property type="pathway name" value="RNA Polymerase II Promoter Escape"/>
</dbReference>
<dbReference type="Reactome" id="R-MMU-73779">
    <property type="pathway name" value="RNA Polymerase II Transcription Pre-Initiation And Promoter Opening"/>
</dbReference>
<dbReference type="Reactome" id="R-MMU-73863">
    <property type="pathway name" value="RNA Polymerase I Transcription Termination"/>
</dbReference>
<dbReference type="Reactome" id="R-MMU-75953">
    <property type="pathway name" value="RNA Polymerase II Transcription Initiation"/>
</dbReference>
<dbReference type="Reactome" id="R-MMU-75955">
    <property type="pathway name" value="RNA Polymerase II Transcription Elongation"/>
</dbReference>
<dbReference type="Reactome" id="R-MMU-76042">
    <property type="pathway name" value="RNA Polymerase II Transcription Initiation And Promoter Clearance"/>
</dbReference>
<dbReference type="Reactome" id="R-MMU-76061">
    <property type="pathway name" value="RNA Polymerase III Transcription Initiation From Type 1 Promoter"/>
</dbReference>
<dbReference type="Reactome" id="R-MMU-76066">
    <property type="pathway name" value="RNA Polymerase III Transcription Initiation From Type 2 Promoter"/>
</dbReference>
<dbReference type="Reactome" id="R-MMU-76071">
    <property type="pathway name" value="RNA Polymerase III Transcription Initiation From Type 3 Promoter"/>
</dbReference>
<dbReference type="Reactome" id="R-MMU-77075">
    <property type="pathway name" value="RNA Pol II CTD phosphorylation and interaction with CE"/>
</dbReference>
<dbReference type="Reactome" id="R-MMU-9018519">
    <property type="pathway name" value="Estrogen-dependent gene expression"/>
</dbReference>
<dbReference type="BioGRID-ORCS" id="66420">
    <property type="hits" value="23 hits in 77 CRISPR screens"/>
</dbReference>
<dbReference type="PRO" id="PR:Q80UW8"/>
<dbReference type="Proteomes" id="UP000000589">
    <property type="component" value="Chromosome 10"/>
</dbReference>
<dbReference type="RNAct" id="Q80UW8">
    <property type="molecule type" value="protein"/>
</dbReference>
<dbReference type="Bgee" id="ENSMUSG00000004667">
    <property type="expression patterns" value="Expressed in yolk sac and 269 other cell types or tissues"/>
</dbReference>
<dbReference type="ExpressionAtlas" id="Q80UW8">
    <property type="expression patterns" value="baseline and differential"/>
</dbReference>
<dbReference type="GO" id="GO:0005654">
    <property type="term" value="C:nucleoplasm"/>
    <property type="evidence" value="ECO:0000304"/>
    <property type="project" value="Reactome"/>
</dbReference>
<dbReference type="GO" id="GO:0005634">
    <property type="term" value="C:nucleus"/>
    <property type="evidence" value="ECO:0000250"/>
    <property type="project" value="UniProtKB"/>
</dbReference>
<dbReference type="GO" id="GO:0005736">
    <property type="term" value="C:RNA polymerase I complex"/>
    <property type="evidence" value="ECO:0007669"/>
    <property type="project" value="Ensembl"/>
</dbReference>
<dbReference type="GO" id="GO:0005665">
    <property type="term" value="C:RNA polymerase II, core complex"/>
    <property type="evidence" value="ECO:0000250"/>
    <property type="project" value="UniProtKB"/>
</dbReference>
<dbReference type="GO" id="GO:0005666">
    <property type="term" value="C:RNA polymerase III complex"/>
    <property type="evidence" value="ECO:0007669"/>
    <property type="project" value="Ensembl"/>
</dbReference>
<dbReference type="GO" id="GO:1990062">
    <property type="term" value="C:RPAP3/R2TP/prefoldin-like complex"/>
    <property type="evidence" value="ECO:0007669"/>
    <property type="project" value="Ensembl"/>
</dbReference>
<dbReference type="GO" id="GO:0003677">
    <property type="term" value="F:DNA binding"/>
    <property type="evidence" value="ECO:0007669"/>
    <property type="project" value="InterPro"/>
</dbReference>
<dbReference type="GO" id="GO:0003899">
    <property type="term" value="F:DNA-directed RNA polymerase activity"/>
    <property type="evidence" value="ECO:0007669"/>
    <property type="project" value="InterPro"/>
</dbReference>
<dbReference type="GO" id="GO:0006366">
    <property type="term" value="P:transcription by RNA polymerase II"/>
    <property type="evidence" value="ECO:0000250"/>
    <property type="project" value="UniProtKB"/>
</dbReference>
<dbReference type="FunFam" id="3.40.1340.10:FF:000001">
    <property type="entry name" value="DNA-directed RNA polymerases I, II, and III subunit RPABC1"/>
    <property type="match status" value="1"/>
</dbReference>
<dbReference type="FunFam" id="3.90.940.20:FF:000001">
    <property type="entry name" value="DNA-directed RNA polymerases I, II, and III subunit RPABC1"/>
    <property type="match status" value="1"/>
</dbReference>
<dbReference type="Gene3D" id="3.40.1340.10">
    <property type="entry name" value="RNA polymerase, Rpb5, N-terminal domain"/>
    <property type="match status" value="1"/>
</dbReference>
<dbReference type="Gene3D" id="3.90.940.20">
    <property type="entry name" value="RPB5-like RNA polymerase subunit"/>
    <property type="match status" value="1"/>
</dbReference>
<dbReference type="HAMAP" id="MF_00025">
    <property type="entry name" value="RNApol_Rpo5_RPB5"/>
    <property type="match status" value="1"/>
</dbReference>
<dbReference type="InterPro" id="IPR014381">
    <property type="entry name" value="Arch_Rpo5/euc_Rpb5"/>
</dbReference>
<dbReference type="InterPro" id="IPR005571">
    <property type="entry name" value="RNA_pol_Rpb5_N"/>
</dbReference>
<dbReference type="InterPro" id="IPR036710">
    <property type="entry name" value="RNA_pol_Rpb5_N_sf"/>
</dbReference>
<dbReference type="InterPro" id="IPR000783">
    <property type="entry name" value="RNA_pol_subH/Rpb5_C"/>
</dbReference>
<dbReference type="InterPro" id="IPR020608">
    <property type="entry name" value="RNA_pol_subH/Rpb5_CS"/>
</dbReference>
<dbReference type="InterPro" id="IPR035913">
    <property type="entry name" value="RPB5-like_sf"/>
</dbReference>
<dbReference type="NCBIfam" id="NF007129">
    <property type="entry name" value="PRK09570.1"/>
    <property type="match status" value="1"/>
</dbReference>
<dbReference type="PANTHER" id="PTHR10535">
    <property type="entry name" value="DNA-DIRECTED RNA POLYMERASES I, II, AND III SUBUNIT RPABC1"/>
    <property type="match status" value="1"/>
</dbReference>
<dbReference type="PANTHER" id="PTHR10535:SF0">
    <property type="entry name" value="DNA-DIRECTED RNA POLYMERASES I, II, AND III SUBUNIT RPABC1"/>
    <property type="match status" value="1"/>
</dbReference>
<dbReference type="Pfam" id="PF01191">
    <property type="entry name" value="RNA_pol_Rpb5_C"/>
    <property type="match status" value="1"/>
</dbReference>
<dbReference type="Pfam" id="PF03871">
    <property type="entry name" value="RNA_pol_Rpb5_N"/>
    <property type="match status" value="1"/>
</dbReference>
<dbReference type="PIRSF" id="PIRSF000747">
    <property type="entry name" value="RPB5"/>
    <property type="match status" value="1"/>
</dbReference>
<dbReference type="SUPFAM" id="SSF53036">
    <property type="entry name" value="Eukaryotic RPB5 N-terminal domain"/>
    <property type="match status" value="1"/>
</dbReference>
<dbReference type="SUPFAM" id="SSF55287">
    <property type="entry name" value="RPB5-like RNA polymerase subunit"/>
    <property type="match status" value="1"/>
</dbReference>
<dbReference type="PROSITE" id="PS01110">
    <property type="entry name" value="RNA_POL_H_23KD"/>
    <property type="match status" value="1"/>
</dbReference>
<proteinExistence type="evidence at protein level"/>
<organism>
    <name type="scientific">Mus musculus</name>
    <name type="common">Mouse</name>
    <dbReference type="NCBI Taxonomy" id="10090"/>
    <lineage>
        <taxon>Eukaryota</taxon>
        <taxon>Metazoa</taxon>
        <taxon>Chordata</taxon>
        <taxon>Craniata</taxon>
        <taxon>Vertebrata</taxon>
        <taxon>Euteleostomi</taxon>
        <taxon>Mammalia</taxon>
        <taxon>Eutheria</taxon>
        <taxon>Euarchontoglires</taxon>
        <taxon>Glires</taxon>
        <taxon>Rodentia</taxon>
        <taxon>Myomorpha</taxon>
        <taxon>Muroidea</taxon>
        <taxon>Muridae</taxon>
        <taxon>Murinae</taxon>
        <taxon>Mus</taxon>
        <taxon>Mus</taxon>
    </lineage>
</organism>
<evidence type="ECO:0000250" key="1"/>
<evidence type="ECO:0000250" key="2">
    <source>
        <dbReference type="UniProtKB" id="P19388"/>
    </source>
</evidence>
<evidence type="ECO:0000250" key="3">
    <source>
        <dbReference type="UniProtKB" id="P20434"/>
    </source>
</evidence>
<evidence type="ECO:0000305" key="4"/>
<evidence type="ECO:0000312" key="5">
    <source>
        <dbReference type="MGI" id="MGI:1913670"/>
    </source>
</evidence>
<accession>Q80UW8</accession>
<keyword id="KW-0007">Acetylation</keyword>
<keyword id="KW-0240">DNA-directed RNA polymerase</keyword>
<keyword id="KW-1017">Isopeptide bond</keyword>
<keyword id="KW-0539">Nucleus</keyword>
<keyword id="KW-1185">Reference proteome</keyword>
<keyword id="KW-0804">Transcription</keyword>
<keyword id="KW-0832">Ubl conjugation</keyword>
<feature type="chain" id="PRO_0000146076" description="DNA-directed RNA polymerases I, II, and III subunit RPABC1">
    <location>
        <begin position="1"/>
        <end position="210"/>
    </location>
</feature>
<feature type="modified residue" description="N-acetylmethionine" evidence="2">
    <location>
        <position position="1"/>
    </location>
</feature>
<feature type="cross-link" description="Glycyl lysine isopeptide (Lys-Gly) (interchain with G-Cter in SUMO2)" evidence="2">
    <location>
        <position position="81"/>
    </location>
</feature>